<comment type="catalytic activity">
    <reaction evidence="4">
        <text>S-ubiquitinyl-[E2 ubiquitin-conjugating enzyme]-L-cysteine + [acceptor protein]-L-lysine = [E2 ubiquitin-conjugating enzyme]-L-cysteine + N(6)-ubiquitinyl-[acceptor protein]-L-lysine.</text>
        <dbReference type="EC" id="2.3.2.27"/>
    </reaction>
</comment>
<comment type="pathway">
    <text>Protein modification; protein ubiquitination.</text>
</comment>
<comment type="subcellular location">
    <subcellularLocation>
        <location evidence="4">Membrane</location>
        <topology evidence="4">Single-pass membrane protein</topology>
    </subcellularLocation>
</comment>
<comment type="domain">
    <text evidence="1">The RING-type zinc finger domain mediates binding to an E2 ubiquitin-conjugating enzyme.</text>
</comment>
<comment type="similarity">
    <text evidence="4">Belongs to the RING-type zinc finger family. ATL subfamily.</text>
</comment>
<protein>
    <recommendedName>
        <fullName>RING-H2 finger protein ATL72</fullName>
        <ecNumber evidence="4">2.3.2.27</ecNumber>
    </recommendedName>
    <alternativeName>
        <fullName evidence="4">RING-type E3 ubiquitin transferase ATL72</fullName>
    </alternativeName>
</protein>
<dbReference type="EC" id="2.3.2.27" evidence="4"/>
<dbReference type="EMBL" id="AC011708">
    <property type="protein sequence ID" value="AAF19558.1"/>
    <property type="molecule type" value="Genomic_DNA"/>
</dbReference>
<dbReference type="EMBL" id="CP002686">
    <property type="protein sequence ID" value="AEE74969.1"/>
    <property type="molecule type" value="Genomic_DNA"/>
</dbReference>
<dbReference type="EMBL" id="BT004771">
    <property type="protein sequence ID" value="AAO44037.1"/>
    <property type="molecule type" value="mRNA"/>
</dbReference>
<dbReference type="EMBL" id="AK227982">
    <property type="protein sequence ID" value="BAE99948.1"/>
    <property type="molecule type" value="mRNA"/>
</dbReference>
<dbReference type="RefSeq" id="NP_187702.1">
    <property type="nucleotide sequence ID" value="NM_111928.3"/>
</dbReference>
<dbReference type="SMR" id="Q9SG96"/>
<dbReference type="BioGRID" id="5595">
    <property type="interactions" value="2"/>
</dbReference>
<dbReference type="STRING" id="3702.Q9SG96"/>
<dbReference type="PaxDb" id="3702-AT3G10910.1"/>
<dbReference type="EnsemblPlants" id="AT3G10910.1">
    <property type="protein sequence ID" value="AT3G10910.1"/>
    <property type="gene ID" value="AT3G10910"/>
</dbReference>
<dbReference type="GeneID" id="820261"/>
<dbReference type="Gramene" id="AT3G10910.1">
    <property type="protein sequence ID" value="AT3G10910.1"/>
    <property type="gene ID" value="AT3G10910"/>
</dbReference>
<dbReference type="KEGG" id="ath:AT3G10910"/>
<dbReference type="Araport" id="AT3G10910"/>
<dbReference type="TAIR" id="AT3G10910">
    <property type="gene designation" value="DAFL1"/>
</dbReference>
<dbReference type="eggNOG" id="KOG0800">
    <property type="taxonomic scope" value="Eukaryota"/>
</dbReference>
<dbReference type="HOGENOM" id="CLU_013137_9_3_1"/>
<dbReference type="InParanoid" id="Q9SG96"/>
<dbReference type="OMA" id="RCIDTWF"/>
<dbReference type="OrthoDB" id="8062037at2759"/>
<dbReference type="PhylomeDB" id="Q9SG96"/>
<dbReference type="UniPathway" id="UPA00143"/>
<dbReference type="PRO" id="PR:Q9SG96"/>
<dbReference type="Proteomes" id="UP000006548">
    <property type="component" value="Chromosome 3"/>
</dbReference>
<dbReference type="ExpressionAtlas" id="Q9SG96">
    <property type="expression patterns" value="baseline and differential"/>
</dbReference>
<dbReference type="GO" id="GO:0016020">
    <property type="term" value="C:membrane"/>
    <property type="evidence" value="ECO:0007669"/>
    <property type="project" value="UniProtKB-SubCell"/>
</dbReference>
<dbReference type="GO" id="GO:0016740">
    <property type="term" value="F:transferase activity"/>
    <property type="evidence" value="ECO:0007669"/>
    <property type="project" value="UniProtKB-KW"/>
</dbReference>
<dbReference type="GO" id="GO:0008270">
    <property type="term" value="F:zinc ion binding"/>
    <property type="evidence" value="ECO:0007669"/>
    <property type="project" value="UniProtKB-KW"/>
</dbReference>
<dbReference type="GO" id="GO:0016567">
    <property type="term" value="P:protein ubiquitination"/>
    <property type="evidence" value="ECO:0007669"/>
    <property type="project" value="UniProtKB-UniPathway"/>
</dbReference>
<dbReference type="CDD" id="cd16461">
    <property type="entry name" value="RING-H2_EL5-like"/>
    <property type="match status" value="1"/>
</dbReference>
<dbReference type="FunFam" id="3.30.40.10:FF:000404">
    <property type="entry name" value="RING-H2 finger protein ATL72-like"/>
    <property type="match status" value="1"/>
</dbReference>
<dbReference type="Gene3D" id="3.30.40.10">
    <property type="entry name" value="Zinc/RING finger domain, C3HC4 (zinc finger)"/>
    <property type="match status" value="1"/>
</dbReference>
<dbReference type="InterPro" id="IPR044602">
    <property type="entry name" value="ATL10/ATL72-79-like"/>
</dbReference>
<dbReference type="InterPro" id="IPR001841">
    <property type="entry name" value="Znf_RING"/>
</dbReference>
<dbReference type="InterPro" id="IPR013083">
    <property type="entry name" value="Znf_RING/FYVE/PHD"/>
</dbReference>
<dbReference type="PANTHER" id="PTHR46905">
    <property type="entry name" value="RING-H2 FINGER PROTEIN ATL78"/>
    <property type="match status" value="1"/>
</dbReference>
<dbReference type="PANTHER" id="PTHR46905:SF21">
    <property type="entry name" value="RING-TYPE E3 UBIQUITIN TRANSFERASE"/>
    <property type="match status" value="1"/>
</dbReference>
<dbReference type="Pfam" id="PF13639">
    <property type="entry name" value="zf-RING_2"/>
    <property type="match status" value="1"/>
</dbReference>
<dbReference type="SMART" id="SM00184">
    <property type="entry name" value="RING"/>
    <property type="match status" value="1"/>
</dbReference>
<dbReference type="SUPFAM" id="SSF57850">
    <property type="entry name" value="RING/U-box"/>
    <property type="match status" value="1"/>
</dbReference>
<dbReference type="PROSITE" id="PS50089">
    <property type="entry name" value="ZF_RING_2"/>
    <property type="match status" value="1"/>
</dbReference>
<proteinExistence type="evidence at transcript level"/>
<name>ATL72_ARATH</name>
<keyword id="KW-0472">Membrane</keyword>
<keyword id="KW-0479">Metal-binding</keyword>
<keyword id="KW-1185">Reference proteome</keyword>
<keyword id="KW-0808">Transferase</keyword>
<keyword id="KW-0812">Transmembrane</keyword>
<keyword id="KW-1133">Transmembrane helix</keyword>
<keyword id="KW-0833">Ubl conjugation pathway</keyword>
<keyword id="KW-0862">Zinc</keyword>
<keyword id="KW-0863">Zinc-finger</keyword>
<reference key="1">
    <citation type="journal article" date="2000" name="Nature">
        <title>Sequence and analysis of chromosome 3 of the plant Arabidopsis thaliana.</title>
        <authorList>
            <person name="Salanoubat M."/>
            <person name="Lemcke K."/>
            <person name="Rieger M."/>
            <person name="Ansorge W."/>
            <person name="Unseld M."/>
            <person name="Fartmann B."/>
            <person name="Valle G."/>
            <person name="Bloecker H."/>
            <person name="Perez-Alonso M."/>
            <person name="Obermaier B."/>
            <person name="Delseny M."/>
            <person name="Boutry M."/>
            <person name="Grivell L.A."/>
            <person name="Mache R."/>
            <person name="Puigdomenech P."/>
            <person name="De Simone V."/>
            <person name="Choisne N."/>
            <person name="Artiguenave F."/>
            <person name="Robert C."/>
            <person name="Brottier P."/>
            <person name="Wincker P."/>
            <person name="Cattolico L."/>
            <person name="Weissenbach J."/>
            <person name="Saurin W."/>
            <person name="Quetier F."/>
            <person name="Schaefer M."/>
            <person name="Mueller-Auer S."/>
            <person name="Gabel C."/>
            <person name="Fuchs M."/>
            <person name="Benes V."/>
            <person name="Wurmbach E."/>
            <person name="Drzonek H."/>
            <person name="Erfle H."/>
            <person name="Jordan N."/>
            <person name="Bangert S."/>
            <person name="Wiedelmann R."/>
            <person name="Kranz H."/>
            <person name="Voss H."/>
            <person name="Holland R."/>
            <person name="Brandt P."/>
            <person name="Nyakatura G."/>
            <person name="Vezzi A."/>
            <person name="D'Angelo M."/>
            <person name="Pallavicini A."/>
            <person name="Toppo S."/>
            <person name="Simionati B."/>
            <person name="Conrad A."/>
            <person name="Hornischer K."/>
            <person name="Kauer G."/>
            <person name="Loehnert T.-H."/>
            <person name="Nordsiek G."/>
            <person name="Reichelt J."/>
            <person name="Scharfe M."/>
            <person name="Schoen O."/>
            <person name="Bargues M."/>
            <person name="Terol J."/>
            <person name="Climent J."/>
            <person name="Navarro P."/>
            <person name="Collado C."/>
            <person name="Perez-Perez A."/>
            <person name="Ottenwaelder B."/>
            <person name="Duchemin D."/>
            <person name="Cooke R."/>
            <person name="Laudie M."/>
            <person name="Berger-Llauro C."/>
            <person name="Purnelle B."/>
            <person name="Masuy D."/>
            <person name="de Haan M."/>
            <person name="Maarse A.C."/>
            <person name="Alcaraz J.-P."/>
            <person name="Cottet A."/>
            <person name="Casacuberta E."/>
            <person name="Monfort A."/>
            <person name="Argiriou A."/>
            <person name="Flores M."/>
            <person name="Liguori R."/>
            <person name="Vitale D."/>
            <person name="Mannhaupt G."/>
            <person name="Haase D."/>
            <person name="Schoof H."/>
            <person name="Rudd S."/>
            <person name="Zaccaria P."/>
            <person name="Mewes H.-W."/>
            <person name="Mayer K.F.X."/>
            <person name="Kaul S."/>
            <person name="Town C.D."/>
            <person name="Koo H.L."/>
            <person name="Tallon L.J."/>
            <person name="Jenkins J."/>
            <person name="Rooney T."/>
            <person name="Rizzo M."/>
            <person name="Walts A."/>
            <person name="Utterback T."/>
            <person name="Fujii C.Y."/>
            <person name="Shea T.P."/>
            <person name="Creasy T.H."/>
            <person name="Haas B."/>
            <person name="Maiti R."/>
            <person name="Wu D."/>
            <person name="Peterson J."/>
            <person name="Van Aken S."/>
            <person name="Pai G."/>
            <person name="Militscher J."/>
            <person name="Sellers P."/>
            <person name="Gill J.E."/>
            <person name="Feldblyum T.V."/>
            <person name="Preuss D."/>
            <person name="Lin X."/>
            <person name="Nierman W.C."/>
            <person name="Salzberg S.L."/>
            <person name="White O."/>
            <person name="Venter J.C."/>
            <person name="Fraser C.M."/>
            <person name="Kaneko T."/>
            <person name="Nakamura Y."/>
            <person name="Sato S."/>
            <person name="Kato T."/>
            <person name="Asamizu E."/>
            <person name="Sasamoto S."/>
            <person name="Kimura T."/>
            <person name="Idesawa K."/>
            <person name="Kawashima K."/>
            <person name="Kishida Y."/>
            <person name="Kiyokawa C."/>
            <person name="Kohara M."/>
            <person name="Matsumoto M."/>
            <person name="Matsuno A."/>
            <person name="Muraki A."/>
            <person name="Nakayama S."/>
            <person name="Nakazaki N."/>
            <person name="Shinpo S."/>
            <person name="Takeuchi C."/>
            <person name="Wada T."/>
            <person name="Watanabe A."/>
            <person name="Yamada M."/>
            <person name="Yasuda M."/>
            <person name="Tabata S."/>
        </authorList>
    </citation>
    <scope>NUCLEOTIDE SEQUENCE [LARGE SCALE GENOMIC DNA]</scope>
    <source>
        <strain>cv. Columbia</strain>
    </source>
</reference>
<reference key="2">
    <citation type="journal article" date="2017" name="Plant J.">
        <title>Araport11: a complete reannotation of the Arabidopsis thaliana reference genome.</title>
        <authorList>
            <person name="Cheng C.Y."/>
            <person name="Krishnakumar V."/>
            <person name="Chan A.P."/>
            <person name="Thibaud-Nissen F."/>
            <person name="Schobel S."/>
            <person name="Town C.D."/>
        </authorList>
    </citation>
    <scope>GENOME REANNOTATION</scope>
    <source>
        <strain>cv. Columbia</strain>
    </source>
</reference>
<reference key="3">
    <citation type="journal article" date="2003" name="Science">
        <title>Empirical analysis of transcriptional activity in the Arabidopsis genome.</title>
        <authorList>
            <person name="Yamada K."/>
            <person name="Lim J."/>
            <person name="Dale J.M."/>
            <person name="Chen H."/>
            <person name="Shinn P."/>
            <person name="Palm C.J."/>
            <person name="Southwick A.M."/>
            <person name="Wu H.C."/>
            <person name="Kim C.J."/>
            <person name="Nguyen M."/>
            <person name="Pham P.K."/>
            <person name="Cheuk R.F."/>
            <person name="Karlin-Newmann G."/>
            <person name="Liu S.X."/>
            <person name="Lam B."/>
            <person name="Sakano H."/>
            <person name="Wu T."/>
            <person name="Yu G."/>
            <person name="Miranda M."/>
            <person name="Quach H.L."/>
            <person name="Tripp M."/>
            <person name="Chang C.H."/>
            <person name="Lee J.M."/>
            <person name="Toriumi M.J."/>
            <person name="Chan M.M."/>
            <person name="Tang C.C."/>
            <person name="Onodera C.S."/>
            <person name="Deng J.M."/>
            <person name="Akiyama K."/>
            <person name="Ansari Y."/>
            <person name="Arakawa T."/>
            <person name="Banh J."/>
            <person name="Banno F."/>
            <person name="Bowser L."/>
            <person name="Brooks S.Y."/>
            <person name="Carninci P."/>
            <person name="Chao Q."/>
            <person name="Choy N."/>
            <person name="Enju A."/>
            <person name="Goldsmith A.D."/>
            <person name="Gurjal M."/>
            <person name="Hansen N.F."/>
            <person name="Hayashizaki Y."/>
            <person name="Johnson-Hopson C."/>
            <person name="Hsuan V.W."/>
            <person name="Iida K."/>
            <person name="Karnes M."/>
            <person name="Khan S."/>
            <person name="Koesema E."/>
            <person name="Ishida J."/>
            <person name="Jiang P.X."/>
            <person name="Jones T."/>
            <person name="Kawai J."/>
            <person name="Kamiya A."/>
            <person name="Meyers C."/>
            <person name="Nakajima M."/>
            <person name="Narusaka M."/>
            <person name="Seki M."/>
            <person name="Sakurai T."/>
            <person name="Satou M."/>
            <person name="Tamse R."/>
            <person name="Vaysberg M."/>
            <person name="Wallender E.K."/>
            <person name="Wong C."/>
            <person name="Yamamura Y."/>
            <person name="Yuan S."/>
            <person name="Shinozaki K."/>
            <person name="Davis R.W."/>
            <person name="Theologis A."/>
            <person name="Ecker J.R."/>
        </authorList>
    </citation>
    <scope>NUCLEOTIDE SEQUENCE [LARGE SCALE MRNA]</scope>
    <source>
        <strain>cv. Columbia</strain>
    </source>
</reference>
<reference key="4">
    <citation type="submission" date="2006-07" db="EMBL/GenBank/DDBJ databases">
        <title>Large-scale analysis of RIKEN Arabidopsis full-length (RAFL) cDNAs.</title>
        <authorList>
            <person name="Totoki Y."/>
            <person name="Seki M."/>
            <person name="Ishida J."/>
            <person name="Nakajima M."/>
            <person name="Enju A."/>
            <person name="Kamiya A."/>
            <person name="Narusaka M."/>
            <person name="Shin-i T."/>
            <person name="Nakagawa M."/>
            <person name="Sakamoto N."/>
            <person name="Oishi K."/>
            <person name="Kohara Y."/>
            <person name="Kobayashi M."/>
            <person name="Toyoda A."/>
            <person name="Sakaki Y."/>
            <person name="Sakurai T."/>
            <person name="Iida K."/>
            <person name="Akiyama K."/>
            <person name="Satou M."/>
            <person name="Toyoda T."/>
            <person name="Konagaya A."/>
            <person name="Carninci P."/>
            <person name="Kawai J."/>
            <person name="Hayashizaki Y."/>
            <person name="Shinozaki K."/>
        </authorList>
    </citation>
    <scope>NUCLEOTIDE SEQUENCE [LARGE SCALE MRNA]</scope>
    <source>
        <strain>cv. Columbia</strain>
    </source>
</reference>
<reference key="5">
    <citation type="journal article" date="2002" name="Genome Biol.">
        <title>Evaluation and classification of RING-finger domains encoded by the Arabidopsis genome.</title>
        <authorList>
            <person name="Kosarev P."/>
            <person name="Mayer K.F.X."/>
            <person name="Hardtke C.S."/>
        </authorList>
    </citation>
    <scope>GENE FAMILY ORGANIZATION</scope>
</reference>
<reference key="6">
    <citation type="journal article" date="2006" name="J. Mol. Evol.">
        <title>The ATL gene family from Arabidopsis thaliana and Oryza sativa comprises a large number of putative ubiquitin ligases of the RING-H2 type.</title>
        <authorList>
            <person name="Serrano M."/>
            <person name="Parra S."/>
            <person name="Alcaraz L.D."/>
            <person name="Guzman P."/>
        </authorList>
    </citation>
    <scope>NOMENCLATURE</scope>
    <scope>GENE FAMILY ORGANIZATION</scope>
</reference>
<evidence type="ECO:0000250" key="1"/>
<evidence type="ECO:0000255" key="2"/>
<evidence type="ECO:0000255" key="3">
    <source>
        <dbReference type="PROSITE-ProRule" id="PRU00175"/>
    </source>
</evidence>
<evidence type="ECO:0000305" key="4"/>
<sequence length="181" mass="19600">MGRLLLEPQANAPANANPKPKGGINDTYFDTNMVIILAALLCALICALSLNSALRCVLRITRRFTSDDQVSNASNANANLGRLAAATGLKKQALKQIPVGLYGSGIIDMKATECLICLGDFEDGEKVRVLPKCNHGFHVRCIDTWLLSRSSCPTCRQSLLLEQPSPMAVSRRDEDMVVSIV</sequence>
<gene>
    <name type="primary">ATL72</name>
    <name type="ordered locus">At3g10910</name>
    <name type="ORF">T7M13.1</name>
</gene>
<accession>Q9SG96</accession>
<accession>Q0WSF0</accession>
<feature type="chain" id="PRO_0000055788" description="RING-H2 finger protein ATL72">
    <location>
        <begin position="1"/>
        <end position="181"/>
    </location>
</feature>
<feature type="transmembrane region" description="Helical" evidence="2">
    <location>
        <begin position="34"/>
        <end position="54"/>
    </location>
</feature>
<feature type="zinc finger region" description="RING-type; atypical" evidence="3">
    <location>
        <begin position="114"/>
        <end position="156"/>
    </location>
</feature>
<organism>
    <name type="scientific">Arabidopsis thaliana</name>
    <name type="common">Mouse-ear cress</name>
    <dbReference type="NCBI Taxonomy" id="3702"/>
    <lineage>
        <taxon>Eukaryota</taxon>
        <taxon>Viridiplantae</taxon>
        <taxon>Streptophyta</taxon>
        <taxon>Embryophyta</taxon>
        <taxon>Tracheophyta</taxon>
        <taxon>Spermatophyta</taxon>
        <taxon>Magnoliopsida</taxon>
        <taxon>eudicotyledons</taxon>
        <taxon>Gunneridae</taxon>
        <taxon>Pentapetalae</taxon>
        <taxon>rosids</taxon>
        <taxon>malvids</taxon>
        <taxon>Brassicales</taxon>
        <taxon>Brassicaceae</taxon>
        <taxon>Camelineae</taxon>
        <taxon>Arabidopsis</taxon>
    </lineage>
</organism>